<proteinExistence type="inferred from homology"/>
<gene>
    <name evidence="1" type="primary">rpmA</name>
    <name type="ordered locus">Paes_1602</name>
</gene>
<feature type="chain" id="PRO_1000128790" description="Large ribosomal subunit protein bL27">
    <location>
        <begin position="1"/>
        <end position="84"/>
    </location>
</feature>
<feature type="region of interest" description="Disordered" evidence="2">
    <location>
        <begin position="1"/>
        <end position="22"/>
    </location>
</feature>
<evidence type="ECO:0000255" key="1">
    <source>
        <dbReference type="HAMAP-Rule" id="MF_00539"/>
    </source>
</evidence>
<evidence type="ECO:0000256" key="2">
    <source>
        <dbReference type="SAM" id="MobiDB-lite"/>
    </source>
</evidence>
<evidence type="ECO:0000305" key="3"/>
<comment type="similarity">
    <text evidence="1">Belongs to the bacterial ribosomal protein bL27 family.</text>
</comment>
<sequence length="84" mass="8776">MAHKKGGGSTKNGRDSNPKYLGVKAAGGSTVSAGSIIVRQRGTVFKPGNNAGIGKDHTIFALIDGKVSFRNGRNNKKQIDILPV</sequence>
<dbReference type="EMBL" id="CP001108">
    <property type="protein sequence ID" value="ACF46620.1"/>
    <property type="molecule type" value="Genomic_DNA"/>
</dbReference>
<dbReference type="RefSeq" id="WP_012506153.1">
    <property type="nucleotide sequence ID" value="NC_011059.1"/>
</dbReference>
<dbReference type="SMR" id="B4S9F0"/>
<dbReference type="STRING" id="290512.Paes_1602"/>
<dbReference type="KEGG" id="paa:Paes_1602"/>
<dbReference type="eggNOG" id="COG0211">
    <property type="taxonomic scope" value="Bacteria"/>
</dbReference>
<dbReference type="HOGENOM" id="CLU_095424_4_1_10"/>
<dbReference type="Proteomes" id="UP000002725">
    <property type="component" value="Chromosome"/>
</dbReference>
<dbReference type="GO" id="GO:0022625">
    <property type="term" value="C:cytosolic large ribosomal subunit"/>
    <property type="evidence" value="ECO:0007669"/>
    <property type="project" value="TreeGrafter"/>
</dbReference>
<dbReference type="GO" id="GO:0003735">
    <property type="term" value="F:structural constituent of ribosome"/>
    <property type="evidence" value="ECO:0007669"/>
    <property type="project" value="InterPro"/>
</dbReference>
<dbReference type="GO" id="GO:0006412">
    <property type="term" value="P:translation"/>
    <property type="evidence" value="ECO:0007669"/>
    <property type="project" value="UniProtKB-UniRule"/>
</dbReference>
<dbReference type="FunFam" id="2.40.50.100:FF:000020">
    <property type="entry name" value="50S ribosomal protein L27"/>
    <property type="match status" value="1"/>
</dbReference>
<dbReference type="Gene3D" id="2.40.50.100">
    <property type="match status" value="1"/>
</dbReference>
<dbReference type="HAMAP" id="MF_00539">
    <property type="entry name" value="Ribosomal_bL27"/>
    <property type="match status" value="1"/>
</dbReference>
<dbReference type="InterPro" id="IPR001684">
    <property type="entry name" value="Ribosomal_bL27"/>
</dbReference>
<dbReference type="InterPro" id="IPR018261">
    <property type="entry name" value="Ribosomal_bL27_CS"/>
</dbReference>
<dbReference type="NCBIfam" id="TIGR00062">
    <property type="entry name" value="L27"/>
    <property type="match status" value="1"/>
</dbReference>
<dbReference type="PANTHER" id="PTHR15893:SF0">
    <property type="entry name" value="LARGE RIBOSOMAL SUBUNIT PROTEIN BL27M"/>
    <property type="match status" value="1"/>
</dbReference>
<dbReference type="PANTHER" id="PTHR15893">
    <property type="entry name" value="RIBOSOMAL PROTEIN L27"/>
    <property type="match status" value="1"/>
</dbReference>
<dbReference type="Pfam" id="PF01016">
    <property type="entry name" value="Ribosomal_L27"/>
    <property type="match status" value="1"/>
</dbReference>
<dbReference type="PRINTS" id="PR00063">
    <property type="entry name" value="RIBOSOMALL27"/>
</dbReference>
<dbReference type="SUPFAM" id="SSF110324">
    <property type="entry name" value="Ribosomal L27 protein-like"/>
    <property type="match status" value="1"/>
</dbReference>
<dbReference type="PROSITE" id="PS00831">
    <property type="entry name" value="RIBOSOMAL_L27"/>
    <property type="match status" value="1"/>
</dbReference>
<keyword id="KW-0687">Ribonucleoprotein</keyword>
<keyword id="KW-0689">Ribosomal protein</keyword>
<organism>
    <name type="scientific">Prosthecochloris aestuarii (strain DSM 271 / SK 413)</name>
    <dbReference type="NCBI Taxonomy" id="290512"/>
    <lineage>
        <taxon>Bacteria</taxon>
        <taxon>Pseudomonadati</taxon>
        <taxon>Chlorobiota</taxon>
        <taxon>Chlorobiia</taxon>
        <taxon>Chlorobiales</taxon>
        <taxon>Chlorobiaceae</taxon>
        <taxon>Prosthecochloris</taxon>
    </lineage>
</organism>
<accession>B4S9F0</accession>
<protein>
    <recommendedName>
        <fullName evidence="1">Large ribosomal subunit protein bL27</fullName>
    </recommendedName>
    <alternativeName>
        <fullName evidence="3">50S ribosomal protein L27</fullName>
    </alternativeName>
</protein>
<name>RL27_PROA2</name>
<reference key="1">
    <citation type="submission" date="2008-06" db="EMBL/GenBank/DDBJ databases">
        <title>Complete sequence of chromosome of Prosthecochloris aestuarii DSM 271.</title>
        <authorList>
            <consortium name="US DOE Joint Genome Institute"/>
            <person name="Lucas S."/>
            <person name="Copeland A."/>
            <person name="Lapidus A."/>
            <person name="Glavina del Rio T."/>
            <person name="Dalin E."/>
            <person name="Tice H."/>
            <person name="Bruce D."/>
            <person name="Goodwin L."/>
            <person name="Pitluck S."/>
            <person name="Schmutz J."/>
            <person name="Larimer F."/>
            <person name="Land M."/>
            <person name="Hauser L."/>
            <person name="Kyrpides N."/>
            <person name="Anderson I."/>
            <person name="Liu Z."/>
            <person name="Li T."/>
            <person name="Zhao F."/>
            <person name="Overmann J."/>
            <person name="Bryant D.A."/>
            <person name="Richardson P."/>
        </authorList>
    </citation>
    <scope>NUCLEOTIDE SEQUENCE [LARGE SCALE GENOMIC DNA]</scope>
    <source>
        <strain>DSM 271 / SK 413</strain>
    </source>
</reference>